<gene>
    <name type="primary">rpl37e</name>
    <name type="ordered locus">PYRAB06510</name>
    <name type="ORF">PAB7160</name>
</gene>
<feature type="chain" id="PRO_0000139734" description="Large ribosomal subunit protein eL37">
    <location>
        <begin position="1"/>
        <end position="62"/>
    </location>
</feature>
<feature type="zinc finger region" description="C4-type" evidence="2">
    <location>
        <begin position="20"/>
        <end position="38"/>
    </location>
</feature>
<feature type="binding site" evidence="1">
    <location>
        <position position="20"/>
    </location>
    <ligand>
        <name>Zn(2+)</name>
        <dbReference type="ChEBI" id="CHEBI:29105"/>
    </ligand>
</feature>
<feature type="binding site" evidence="1">
    <location>
        <position position="23"/>
    </location>
    <ligand>
        <name>Zn(2+)</name>
        <dbReference type="ChEBI" id="CHEBI:29105"/>
    </ligand>
</feature>
<feature type="binding site" evidence="1">
    <location>
        <position position="35"/>
    </location>
    <ligand>
        <name>Zn(2+)</name>
        <dbReference type="ChEBI" id="CHEBI:29105"/>
    </ligand>
</feature>
<feature type="binding site" evidence="1">
    <location>
        <position position="38"/>
    </location>
    <ligand>
        <name>Zn(2+)</name>
        <dbReference type="ChEBI" id="CHEBI:29105"/>
    </ligand>
</feature>
<name>RL37_PYRAB</name>
<organism>
    <name type="scientific">Pyrococcus abyssi (strain GE5 / Orsay)</name>
    <dbReference type="NCBI Taxonomy" id="272844"/>
    <lineage>
        <taxon>Archaea</taxon>
        <taxon>Methanobacteriati</taxon>
        <taxon>Methanobacteriota</taxon>
        <taxon>Thermococci</taxon>
        <taxon>Thermococcales</taxon>
        <taxon>Thermococcaceae</taxon>
        <taxon>Pyrococcus</taxon>
    </lineage>
</organism>
<protein>
    <recommendedName>
        <fullName evidence="3">Large ribosomal subunit protein eL37</fullName>
    </recommendedName>
    <alternativeName>
        <fullName>50S ribosomal protein L37e</fullName>
    </alternativeName>
</protein>
<accession>P62004</accession>
<accession>G8ZJA9</accession>
<accession>O74015</accession>
<sequence length="62" mass="7298">MSSGTPSLGKRNKTPTHIRCRRCGRKAFNVKKGYCAACGFGRSRRLRKYRWSKKWKKKKNVH</sequence>
<proteinExistence type="inferred from homology"/>
<reference key="1">
    <citation type="journal article" date="2003" name="Mol. Microbiol.">
        <title>An integrated analysis of the genome of the hyperthermophilic archaeon Pyrococcus abyssi.</title>
        <authorList>
            <person name="Cohen G.N."/>
            <person name="Barbe V."/>
            <person name="Flament D."/>
            <person name="Galperin M."/>
            <person name="Heilig R."/>
            <person name="Lecompte O."/>
            <person name="Poch O."/>
            <person name="Prieur D."/>
            <person name="Querellou J."/>
            <person name="Ripp R."/>
            <person name="Thierry J.-C."/>
            <person name="Van der Oost J."/>
            <person name="Weissenbach J."/>
            <person name="Zivanovic Y."/>
            <person name="Forterre P."/>
        </authorList>
    </citation>
    <scope>NUCLEOTIDE SEQUENCE [LARGE SCALE GENOMIC DNA]</scope>
    <source>
        <strain>GE5 / Orsay</strain>
    </source>
</reference>
<reference key="2">
    <citation type="journal article" date="2012" name="Curr. Microbiol.">
        <title>Re-annotation of two hyperthermophilic archaea Pyrococcus abyssi GE5 and Pyrococcus furiosus DSM 3638.</title>
        <authorList>
            <person name="Gao J."/>
            <person name="Wang J."/>
        </authorList>
    </citation>
    <scope>GENOME REANNOTATION</scope>
    <source>
        <strain>GE5 / Orsay</strain>
    </source>
</reference>
<keyword id="KW-0479">Metal-binding</keyword>
<keyword id="KW-0687">Ribonucleoprotein</keyword>
<keyword id="KW-0689">Ribosomal protein</keyword>
<keyword id="KW-0694">RNA-binding</keyword>
<keyword id="KW-0699">rRNA-binding</keyword>
<keyword id="KW-0862">Zinc</keyword>
<keyword id="KW-0863">Zinc-finger</keyword>
<dbReference type="EMBL" id="AJ248285">
    <property type="protein sequence ID" value="CAB49564.1"/>
    <property type="molecule type" value="Genomic_DNA"/>
</dbReference>
<dbReference type="EMBL" id="HE613800">
    <property type="protein sequence ID" value="CCE70036.1"/>
    <property type="molecule type" value="Genomic_DNA"/>
</dbReference>
<dbReference type="PIR" id="C75106">
    <property type="entry name" value="C75106"/>
</dbReference>
<dbReference type="RefSeq" id="WP_010867766.1">
    <property type="nucleotide sequence ID" value="NC_000868.1"/>
</dbReference>
<dbReference type="SMR" id="P62004"/>
<dbReference type="STRING" id="272844.PAB7160"/>
<dbReference type="KEGG" id="pab:PAB7160"/>
<dbReference type="PATRIC" id="fig|272844.11.peg.682"/>
<dbReference type="eggNOG" id="arCOG04126">
    <property type="taxonomic scope" value="Archaea"/>
</dbReference>
<dbReference type="HOGENOM" id="CLU_208825_0_0_2"/>
<dbReference type="OrthoDB" id="5619at2157"/>
<dbReference type="PhylomeDB" id="P62004"/>
<dbReference type="Proteomes" id="UP000000810">
    <property type="component" value="Chromosome"/>
</dbReference>
<dbReference type="Proteomes" id="UP000009139">
    <property type="component" value="Chromosome"/>
</dbReference>
<dbReference type="GO" id="GO:0022625">
    <property type="term" value="C:cytosolic large ribosomal subunit"/>
    <property type="evidence" value="ECO:0007669"/>
    <property type="project" value="TreeGrafter"/>
</dbReference>
<dbReference type="GO" id="GO:0019843">
    <property type="term" value="F:rRNA binding"/>
    <property type="evidence" value="ECO:0007669"/>
    <property type="project" value="UniProtKB-KW"/>
</dbReference>
<dbReference type="GO" id="GO:0003735">
    <property type="term" value="F:structural constituent of ribosome"/>
    <property type="evidence" value="ECO:0007669"/>
    <property type="project" value="InterPro"/>
</dbReference>
<dbReference type="GO" id="GO:0008270">
    <property type="term" value="F:zinc ion binding"/>
    <property type="evidence" value="ECO:0007669"/>
    <property type="project" value="UniProtKB-UniRule"/>
</dbReference>
<dbReference type="GO" id="GO:0006412">
    <property type="term" value="P:translation"/>
    <property type="evidence" value="ECO:0007669"/>
    <property type="project" value="UniProtKB-UniRule"/>
</dbReference>
<dbReference type="FunFam" id="2.20.25.30:FF:000003">
    <property type="entry name" value="50S ribosomal protein L37e"/>
    <property type="match status" value="1"/>
</dbReference>
<dbReference type="Gene3D" id="2.20.25.30">
    <property type="match status" value="1"/>
</dbReference>
<dbReference type="HAMAP" id="MF_00547">
    <property type="entry name" value="Ribosomal_eL37"/>
    <property type="match status" value="1"/>
</dbReference>
<dbReference type="InterPro" id="IPR001569">
    <property type="entry name" value="Ribosomal_eL37"/>
</dbReference>
<dbReference type="InterPro" id="IPR011331">
    <property type="entry name" value="Ribosomal_eL37/eL43"/>
</dbReference>
<dbReference type="InterPro" id="IPR018267">
    <property type="entry name" value="Ribosomal_eL37_CS"/>
</dbReference>
<dbReference type="InterPro" id="IPR011332">
    <property type="entry name" value="Ribosomal_zn-bd"/>
</dbReference>
<dbReference type="NCBIfam" id="NF003214">
    <property type="entry name" value="PRK04179.1"/>
    <property type="match status" value="1"/>
</dbReference>
<dbReference type="PANTHER" id="PTHR10768">
    <property type="entry name" value="60S RIBOSOMAL PROTEIN L37"/>
    <property type="match status" value="1"/>
</dbReference>
<dbReference type="PANTHER" id="PTHR10768:SF0">
    <property type="entry name" value="RIBOSOMAL PROTEIN L37"/>
    <property type="match status" value="1"/>
</dbReference>
<dbReference type="Pfam" id="PF01907">
    <property type="entry name" value="Ribosomal_L37e"/>
    <property type="match status" value="1"/>
</dbReference>
<dbReference type="SUPFAM" id="SSF57829">
    <property type="entry name" value="Zn-binding ribosomal proteins"/>
    <property type="match status" value="1"/>
</dbReference>
<dbReference type="PROSITE" id="PS01077">
    <property type="entry name" value="RIBOSOMAL_L37E"/>
    <property type="match status" value="1"/>
</dbReference>
<evidence type="ECO:0000250" key="1"/>
<evidence type="ECO:0000255" key="2"/>
<evidence type="ECO:0000305" key="3"/>
<comment type="function">
    <text evidence="1">Binds to the 23S rRNA.</text>
</comment>
<comment type="cofactor">
    <cofactor evidence="1">
        <name>Zn(2+)</name>
        <dbReference type="ChEBI" id="CHEBI:29105"/>
    </cofactor>
    <text evidence="1">Binds 1 zinc ion per subunit.</text>
</comment>
<comment type="similarity">
    <text evidence="3">Belongs to the eukaryotic ribosomal protein eL37 family.</text>
</comment>